<proteinExistence type="inferred from homology"/>
<sequence length="84" mass="9671">MRGSSNRKIDPRIHYLVPKHEVLSIDEAYKILKELGIRPEQLPWIRASDPVARSINAKPGDIIRIIRKSQLYGEVVSYRYVISG</sequence>
<accession>C3MZM6</accession>
<gene>
    <name evidence="1" type="primary">rpo5</name>
    <name evidence="1" type="synonym">rpoH</name>
    <name type="ordered locus">M1627_1987</name>
</gene>
<evidence type="ECO:0000255" key="1">
    <source>
        <dbReference type="HAMAP-Rule" id="MF_00025"/>
    </source>
</evidence>
<name>RPO5_SACI3</name>
<organism>
    <name type="scientific">Saccharolobus islandicus (strain M.16.27)</name>
    <name type="common">Sulfolobus islandicus</name>
    <dbReference type="NCBI Taxonomy" id="427318"/>
    <lineage>
        <taxon>Archaea</taxon>
        <taxon>Thermoproteota</taxon>
        <taxon>Thermoprotei</taxon>
        <taxon>Sulfolobales</taxon>
        <taxon>Sulfolobaceae</taxon>
        <taxon>Saccharolobus</taxon>
    </lineage>
</organism>
<dbReference type="EC" id="2.7.7.6" evidence="1"/>
<dbReference type="EMBL" id="CP001401">
    <property type="protein sequence ID" value="ACP55858.1"/>
    <property type="molecule type" value="Genomic_DNA"/>
</dbReference>
<dbReference type="RefSeq" id="WP_012711883.1">
    <property type="nucleotide sequence ID" value="NC_012632.1"/>
</dbReference>
<dbReference type="SMR" id="C3MZM6"/>
<dbReference type="KEGG" id="sim:M1627_1987"/>
<dbReference type="HOGENOM" id="CLU_058320_4_0_2"/>
<dbReference type="Proteomes" id="UP000002307">
    <property type="component" value="Chromosome"/>
</dbReference>
<dbReference type="GO" id="GO:0005737">
    <property type="term" value="C:cytoplasm"/>
    <property type="evidence" value="ECO:0007669"/>
    <property type="project" value="UniProtKB-SubCell"/>
</dbReference>
<dbReference type="GO" id="GO:0000428">
    <property type="term" value="C:DNA-directed RNA polymerase complex"/>
    <property type="evidence" value="ECO:0007669"/>
    <property type="project" value="UniProtKB-KW"/>
</dbReference>
<dbReference type="GO" id="GO:0003677">
    <property type="term" value="F:DNA binding"/>
    <property type="evidence" value="ECO:0007669"/>
    <property type="project" value="InterPro"/>
</dbReference>
<dbReference type="GO" id="GO:0003899">
    <property type="term" value="F:DNA-directed RNA polymerase activity"/>
    <property type="evidence" value="ECO:0007669"/>
    <property type="project" value="UniProtKB-UniRule"/>
</dbReference>
<dbReference type="GO" id="GO:0006366">
    <property type="term" value="P:transcription by RNA polymerase II"/>
    <property type="evidence" value="ECO:0007669"/>
    <property type="project" value="TreeGrafter"/>
</dbReference>
<dbReference type="GO" id="GO:0006362">
    <property type="term" value="P:transcription elongation by RNA polymerase I"/>
    <property type="evidence" value="ECO:0007669"/>
    <property type="project" value="TreeGrafter"/>
</dbReference>
<dbReference type="GO" id="GO:0042797">
    <property type="term" value="P:tRNA transcription by RNA polymerase III"/>
    <property type="evidence" value="ECO:0007669"/>
    <property type="project" value="TreeGrafter"/>
</dbReference>
<dbReference type="Gene3D" id="3.90.940.20">
    <property type="entry name" value="RPB5-like RNA polymerase subunit"/>
    <property type="match status" value="1"/>
</dbReference>
<dbReference type="HAMAP" id="MF_00025">
    <property type="entry name" value="RNApol_Rpo5_RPB5"/>
    <property type="match status" value="1"/>
</dbReference>
<dbReference type="InterPro" id="IPR014381">
    <property type="entry name" value="Arch_Rpo5/euc_Rpb5"/>
</dbReference>
<dbReference type="InterPro" id="IPR000783">
    <property type="entry name" value="RNA_pol_subH/Rpb5_C"/>
</dbReference>
<dbReference type="InterPro" id="IPR020608">
    <property type="entry name" value="RNA_pol_subH/Rpb5_CS"/>
</dbReference>
<dbReference type="InterPro" id="IPR035913">
    <property type="entry name" value="RPB5-like_sf"/>
</dbReference>
<dbReference type="NCBIfam" id="NF007129">
    <property type="entry name" value="PRK09570.1"/>
    <property type="match status" value="1"/>
</dbReference>
<dbReference type="PANTHER" id="PTHR10535">
    <property type="entry name" value="DNA-DIRECTED RNA POLYMERASES I, II, AND III SUBUNIT RPABC1"/>
    <property type="match status" value="1"/>
</dbReference>
<dbReference type="PANTHER" id="PTHR10535:SF0">
    <property type="entry name" value="DNA-DIRECTED RNA POLYMERASES I, II, AND III SUBUNIT RPABC1"/>
    <property type="match status" value="1"/>
</dbReference>
<dbReference type="Pfam" id="PF01191">
    <property type="entry name" value="RNA_pol_Rpb5_C"/>
    <property type="match status" value="1"/>
</dbReference>
<dbReference type="SUPFAM" id="SSF55287">
    <property type="entry name" value="RPB5-like RNA polymerase subunit"/>
    <property type="match status" value="1"/>
</dbReference>
<dbReference type="PROSITE" id="PS01110">
    <property type="entry name" value="RNA_POL_H_23KD"/>
    <property type="match status" value="1"/>
</dbReference>
<feature type="chain" id="PRO_1000201949" description="DNA-directed RNA polymerase subunit Rpo5">
    <location>
        <begin position="1"/>
        <end position="84"/>
    </location>
</feature>
<protein>
    <recommendedName>
        <fullName evidence="1">DNA-directed RNA polymerase subunit Rpo5</fullName>
        <ecNumber evidence="1">2.7.7.6</ecNumber>
    </recommendedName>
    <alternativeName>
        <fullName evidence="1">DNA-directed RNA polymerase subunit H</fullName>
    </alternativeName>
</protein>
<comment type="function">
    <text evidence="1">DNA-dependent RNA polymerase (RNAP) catalyzes the transcription of DNA into RNA using the four ribonucleoside triphosphates as substrates.</text>
</comment>
<comment type="catalytic activity">
    <reaction evidence="1">
        <text>RNA(n) + a ribonucleoside 5'-triphosphate = RNA(n+1) + diphosphate</text>
        <dbReference type="Rhea" id="RHEA:21248"/>
        <dbReference type="Rhea" id="RHEA-COMP:14527"/>
        <dbReference type="Rhea" id="RHEA-COMP:17342"/>
        <dbReference type="ChEBI" id="CHEBI:33019"/>
        <dbReference type="ChEBI" id="CHEBI:61557"/>
        <dbReference type="ChEBI" id="CHEBI:140395"/>
        <dbReference type="EC" id="2.7.7.6"/>
    </reaction>
</comment>
<comment type="subunit">
    <text evidence="1">Part of the RNA polymerase complex.</text>
</comment>
<comment type="subcellular location">
    <subcellularLocation>
        <location evidence="1">Cytoplasm</location>
    </subcellularLocation>
</comment>
<comment type="similarity">
    <text evidence="1">Belongs to the archaeal Rpo5/eukaryotic RPB5 RNA polymerase subunit family.</text>
</comment>
<keyword id="KW-0963">Cytoplasm</keyword>
<keyword id="KW-0240">DNA-directed RNA polymerase</keyword>
<keyword id="KW-0548">Nucleotidyltransferase</keyword>
<keyword id="KW-0804">Transcription</keyword>
<keyword id="KW-0808">Transferase</keyword>
<reference key="1">
    <citation type="journal article" date="2009" name="Proc. Natl. Acad. Sci. U.S.A.">
        <title>Biogeography of the Sulfolobus islandicus pan-genome.</title>
        <authorList>
            <person name="Reno M.L."/>
            <person name="Held N.L."/>
            <person name="Fields C.J."/>
            <person name="Burke P.V."/>
            <person name="Whitaker R.J."/>
        </authorList>
    </citation>
    <scope>NUCLEOTIDE SEQUENCE [LARGE SCALE GENOMIC DNA]</scope>
    <source>
        <strain>M.16.27</strain>
    </source>
</reference>